<evidence type="ECO:0000250" key="1"/>
<evidence type="ECO:0000305" key="2"/>
<proteinExistence type="inferred from homology"/>
<reference key="1">
    <citation type="journal article" date="1993" name="J. Gen. Virol.">
        <title>Nucleotide sequence evidence for the occurrence of three distinct whitefly-transmitted geminiviruses in cassava.</title>
        <authorList>
            <person name="Hong Y.G."/>
            <person name="Robinson D.J."/>
            <person name="Harrison B.D."/>
        </authorList>
    </citation>
    <scope>NUCLEOTIDE SEQUENCE [GENOMIC DNA]</scope>
</reference>
<feature type="chain" id="PRO_0000222255" description="Movement protein BC1">
    <location>
        <begin position="1"/>
        <end position="287"/>
    </location>
</feature>
<sequence>MENNSSNAAYLRSERVEYELTNDSTDVKLSFPSLLDNKISLLKGHCCKIDHIVLEYRNQVPINATGHVIIEIHDQRLHDGDSKQAEFTIPVQCNCNLHYYSSSFSTMKDINPWRVMYRVVDTNVINGVHFCRIQGKLKLVNCKRSPNDIQFRSPKIEILSKAFTERDIDFWSVGRKAQQRKLVQGPSLIGSRSMRYAPCSIGPNESWAVRSELGLHEPWAVKERGWASIERPYNQLNRLNPDALDPGKSVSQVGSDQFTREDLNDIISKTVNICLNTSMQSHVSKNV</sequence>
<comment type="function">
    <text evidence="1">Transports viral genome to neighboring plant cells directly through plasmosdesmata, without any budding. The movement protein allows efficient cell to cell propagation, by bypassing the host cell wall barrier. Begomovirus genome is shuttled out of nucleus by Nuclear shuttle protein (NSP) and the movement protein transports the DNA-NSP complex to cell plasmodesmata and facilitates further movement across the cell wall (By similarity).</text>
</comment>
<comment type="subunit">
    <text evidence="1">Binds to dimeric supercoiled plasmid DNA.</text>
</comment>
<comment type="subcellular location">
    <subcellularLocation>
        <location evidence="1">Host cell membrane</location>
        <topology evidence="1">Peripheral membrane protein</topology>
        <orientation evidence="1">Cytoplasmic side</orientation>
    </subcellularLocation>
    <subcellularLocation>
        <location evidence="1">Host microsome membrane</location>
        <topology evidence="1">Peripheral membrane protein</topology>
        <orientation evidence="1">Cytoplasmic side</orientation>
    </subcellularLocation>
    <subcellularLocation>
        <location evidence="1">Host endoplasmic reticulum membrane</location>
        <topology evidence="1">Peripheral membrane protein</topology>
        <orientation evidence="1">Cytoplasmic side</orientation>
    </subcellularLocation>
    <text evidence="1">Found on ER-derived vesicles.</text>
</comment>
<comment type="PTM">
    <text evidence="1">Phosphorylated.</text>
</comment>
<comment type="similarity">
    <text evidence="2">Belongs to the begomovirus movement protein BC1 family.</text>
</comment>
<keyword id="KW-0238">DNA-binding</keyword>
<keyword id="KW-1032">Host cell membrane</keyword>
<keyword id="KW-1038">Host endoplasmic reticulum</keyword>
<keyword id="KW-1043">Host membrane</keyword>
<keyword id="KW-1044">Host microsome</keyword>
<keyword id="KW-0472">Membrane</keyword>
<keyword id="KW-0597">Phosphoprotein</keyword>
<keyword id="KW-0813">Transport</keyword>
<keyword id="KW-0916">Viral movement protein</keyword>
<organismHost>
    <name type="scientific">Manihot esculenta</name>
    <name type="common">Cassava</name>
    <name type="synonym">Jatropha manihot</name>
    <dbReference type="NCBI Taxonomy" id="3983"/>
</organismHost>
<name>MVP_ICMV</name>
<accession>Q08594</accession>
<dbReference type="EMBL" id="Z24759">
    <property type="protein sequence ID" value="CAA80893.1"/>
    <property type="molecule type" value="Genomic_DNA"/>
</dbReference>
<dbReference type="PIR" id="JQ2331">
    <property type="entry name" value="JQ2331"/>
</dbReference>
<dbReference type="RefSeq" id="NP_047236.1">
    <property type="nucleotide sequence ID" value="NC_001933.1"/>
</dbReference>
<dbReference type="GeneID" id="991063"/>
<dbReference type="KEGG" id="vg:991063"/>
<dbReference type="OrthoDB" id="11948at10239"/>
<dbReference type="Proteomes" id="UP000007210">
    <property type="component" value="Genome"/>
</dbReference>
<dbReference type="GO" id="GO:0044167">
    <property type="term" value="C:host cell endoplasmic reticulum membrane"/>
    <property type="evidence" value="ECO:0007669"/>
    <property type="project" value="UniProtKB-SubCell"/>
</dbReference>
<dbReference type="GO" id="GO:0020002">
    <property type="term" value="C:host cell plasma membrane"/>
    <property type="evidence" value="ECO:0007669"/>
    <property type="project" value="UniProtKB-SubCell"/>
</dbReference>
<dbReference type="GO" id="GO:0016020">
    <property type="term" value="C:membrane"/>
    <property type="evidence" value="ECO:0007669"/>
    <property type="project" value="UniProtKB-KW"/>
</dbReference>
<dbReference type="GO" id="GO:0003677">
    <property type="term" value="F:DNA binding"/>
    <property type="evidence" value="ECO:0007669"/>
    <property type="project" value="UniProtKB-KW"/>
</dbReference>
<dbReference type="GO" id="GO:0046740">
    <property type="term" value="P:transport of virus in host, cell to cell"/>
    <property type="evidence" value="ECO:0007669"/>
    <property type="project" value="UniProtKB-KW"/>
</dbReference>
<dbReference type="InterPro" id="IPR000211">
    <property type="entry name" value="Gemini_BL"/>
</dbReference>
<dbReference type="Pfam" id="PF00845">
    <property type="entry name" value="Gemini_BL1"/>
    <property type="match status" value="1"/>
</dbReference>
<protein>
    <recommendedName>
        <fullName>Movement protein BC1</fullName>
    </recommendedName>
    <alternativeName>
        <fullName>Movement protein BL1</fullName>
    </alternativeName>
</protein>
<gene>
    <name type="ORF">BC1</name>
    <name type="ORF">BL1</name>
</gene>
<organism>
    <name type="scientific">Indian cassava mosaic virus</name>
    <name type="common">ICMV</name>
    <dbReference type="NCBI Taxonomy" id="31600"/>
    <lineage>
        <taxon>Viruses</taxon>
        <taxon>Monodnaviria</taxon>
        <taxon>Shotokuvirae</taxon>
        <taxon>Cressdnaviricota</taxon>
        <taxon>Repensiviricetes</taxon>
        <taxon>Geplafuvirales</taxon>
        <taxon>Geminiviridae</taxon>
        <taxon>Begomovirus</taxon>
    </lineage>
</organism>